<feature type="chain" id="PRO_1000125169" description="Adenylate kinase">
    <location>
        <begin position="1"/>
        <end position="220"/>
    </location>
</feature>
<feature type="region of interest" description="NMP" evidence="1">
    <location>
        <begin position="32"/>
        <end position="62"/>
    </location>
</feature>
<feature type="region of interest" description="LID" evidence="1">
    <location>
        <begin position="129"/>
        <end position="166"/>
    </location>
</feature>
<feature type="binding site" evidence="1">
    <location>
        <begin position="12"/>
        <end position="17"/>
    </location>
    <ligand>
        <name>ATP</name>
        <dbReference type="ChEBI" id="CHEBI:30616"/>
    </ligand>
</feature>
<feature type="binding site" evidence="1">
    <location>
        <position position="33"/>
    </location>
    <ligand>
        <name>AMP</name>
        <dbReference type="ChEBI" id="CHEBI:456215"/>
    </ligand>
</feature>
<feature type="binding site" evidence="1">
    <location>
        <position position="38"/>
    </location>
    <ligand>
        <name>AMP</name>
        <dbReference type="ChEBI" id="CHEBI:456215"/>
    </ligand>
</feature>
<feature type="binding site" evidence="1">
    <location>
        <begin position="60"/>
        <end position="62"/>
    </location>
    <ligand>
        <name>AMP</name>
        <dbReference type="ChEBI" id="CHEBI:456215"/>
    </ligand>
</feature>
<feature type="binding site" evidence="1">
    <location>
        <begin position="88"/>
        <end position="91"/>
    </location>
    <ligand>
        <name>AMP</name>
        <dbReference type="ChEBI" id="CHEBI:456215"/>
    </ligand>
</feature>
<feature type="binding site" evidence="1">
    <location>
        <position position="95"/>
    </location>
    <ligand>
        <name>AMP</name>
        <dbReference type="ChEBI" id="CHEBI:456215"/>
    </ligand>
</feature>
<feature type="binding site" evidence="1">
    <location>
        <position position="130"/>
    </location>
    <ligand>
        <name>ATP</name>
        <dbReference type="ChEBI" id="CHEBI:30616"/>
    </ligand>
</feature>
<feature type="binding site" evidence="1">
    <location>
        <position position="133"/>
    </location>
    <ligand>
        <name>Zn(2+)</name>
        <dbReference type="ChEBI" id="CHEBI:29105"/>
        <note>structural</note>
    </ligand>
</feature>
<feature type="binding site" evidence="1">
    <location>
        <position position="136"/>
    </location>
    <ligand>
        <name>Zn(2+)</name>
        <dbReference type="ChEBI" id="CHEBI:29105"/>
        <note>structural</note>
    </ligand>
</feature>
<feature type="binding site" evidence="1">
    <location>
        <begin position="139"/>
        <end position="140"/>
    </location>
    <ligand>
        <name>ATP</name>
        <dbReference type="ChEBI" id="CHEBI:30616"/>
    </ligand>
</feature>
<feature type="binding site" evidence="1">
    <location>
        <position position="153"/>
    </location>
    <ligand>
        <name>Zn(2+)</name>
        <dbReference type="ChEBI" id="CHEBI:29105"/>
        <note>structural</note>
    </ligand>
</feature>
<feature type="binding site" evidence="1">
    <location>
        <position position="156"/>
    </location>
    <ligand>
        <name>Zn(2+)</name>
        <dbReference type="ChEBI" id="CHEBI:29105"/>
        <note>structural</note>
    </ligand>
</feature>
<feature type="binding site" evidence="1">
    <location>
        <position position="163"/>
    </location>
    <ligand>
        <name>AMP</name>
        <dbReference type="ChEBI" id="CHEBI:456215"/>
    </ligand>
</feature>
<feature type="binding site" evidence="1">
    <location>
        <position position="174"/>
    </location>
    <ligand>
        <name>AMP</name>
        <dbReference type="ChEBI" id="CHEBI:456215"/>
    </ligand>
</feature>
<feature type="binding site" evidence="1">
    <location>
        <position position="202"/>
    </location>
    <ligand>
        <name>ATP</name>
        <dbReference type="ChEBI" id="CHEBI:30616"/>
    </ligand>
</feature>
<protein>
    <recommendedName>
        <fullName evidence="1">Adenylate kinase</fullName>
        <shortName evidence="1">AK</shortName>
        <ecNumber evidence="1">2.7.4.3</ecNumber>
    </recommendedName>
    <alternativeName>
        <fullName evidence="1">ATP-AMP transphosphorylase</fullName>
    </alternativeName>
    <alternativeName>
        <fullName evidence="1">ATP:AMP phosphotransferase</fullName>
    </alternativeName>
    <alternativeName>
        <fullName evidence="1">Adenylate monophosphate kinase</fullName>
    </alternativeName>
</protein>
<keyword id="KW-0067">ATP-binding</keyword>
<keyword id="KW-0963">Cytoplasm</keyword>
<keyword id="KW-0418">Kinase</keyword>
<keyword id="KW-0479">Metal-binding</keyword>
<keyword id="KW-0545">Nucleotide biosynthesis</keyword>
<keyword id="KW-0547">Nucleotide-binding</keyword>
<keyword id="KW-0808">Transferase</keyword>
<keyword id="KW-0862">Zinc</keyword>
<evidence type="ECO:0000255" key="1">
    <source>
        <dbReference type="HAMAP-Rule" id="MF_00235"/>
    </source>
</evidence>
<reference key="1">
    <citation type="submission" date="2007-11" db="EMBL/GenBank/DDBJ databases">
        <title>The genome sequence of the hyperthermophilic bacterium Thermotoga neapolitana.</title>
        <authorList>
            <person name="Lim S.K."/>
            <person name="Kim J.S."/>
            <person name="Cha S.H."/>
            <person name="Park B.C."/>
            <person name="Lee D.S."/>
            <person name="Tae H.S."/>
            <person name="Kim S.-J."/>
            <person name="Kim J.J."/>
            <person name="Park K.J."/>
            <person name="Lee S.Y."/>
        </authorList>
    </citation>
    <scope>NUCLEOTIDE SEQUENCE [LARGE SCALE GENOMIC DNA]</scope>
    <source>
        <strain>ATCC 49049 / DSM 4359 / NBRC 107923 / NS-E</strain>
    </source>
</reference>
<organism>
    <name type="scientific">Thermotoga neapolitana (strain ATCC 49049 / DSM 4359 / NBRC 107923 / NS-E)</name>
    <dbReference type="NCBI Taxonomy" id="309803"/>
    <lineage>
        <taxon>Bacteria</taxon>
        <taxon>Thermotogati</taxon>
        <taxon>Thermotogota</taxon>
        <taxon>Thermotogae</taxon>
        <taxon>Thermotogales</taxon>
        <taxon>Thermotogaceae</taxon>
        <taxon>Thermotoga</taxon>
    </lineage>
</organism>
<name>KAD_THENN</name>
<accession>B9K8A7</accession>
<dbReference type="EC" id="2.7.4.3" evidence="1"/>
<dbReference type="EMBL" id="CP000916">
    <property type="protein sequence ID" value="ACM23190.1"/>
    <property type="molecule type" value="Genomic_DNA"/>
</dbReference>
<dbReference type="RefSeq" id="WP_015919506.1">
    <property type="nucleotide sequence ID" value="NC_011978.1"/>
</dbReference>
<dbReference type="SMR" id="B9K8A7"/>
<dbReference type="STRING" id="309803.CTN_1014"/>
<dbReference type="KEGG" id="tna:CTN_1014"/>
<dbReference type="eggNOG" id="COG0563">
    <property type="taxonomic scope" value="Bacteria"/>
</dbReference>
<dbReference type="HOGENOM" id="CLU_032354_1_2_0"/>
<dbReference type="UniPathway" id="UPA00588">
    <property type="reaction ID" value="UER00649"/>
</dbReference>
<dbReference type="Proteomes" id="UP000000445">
    <property type="component" value="Chromosome"/>
</dbReference>
<dbReference type="GO" id="GO:0005737">
    <property type="term" value="C:cytoplasm"/>
    <property type="evidence" value="ECO:0007669"/>
    <property type="project" value="UniProtKB-SubCell"/>
</dbReference>
<dbReference type="GO" id="GO:0004017">
    <property type="term" value="F:adenylate kinase activity"/>
    <property type="evidence" value="ECO:0007669"/>
    <property type="project" value="UniProtKB-UniRule"/>
</dbReference>
<dbReference type="GO" id="GO:0005524">
    <property type="term" value="F:ATP binding"/>
    <property type="evidence" value="ECO:0007669"/>
    <property type="project" value="UniProtKB-UniRule"/>
</dbReference>
<dbReference type="GO" id="GO:0008270">
    <property type="term" value="F:zinc ion binding"/>
    <property type="evidence" value="ECO:0007669"/>
    <property type="project" value="UniProtKB-UniRule"/>
</dbReference>
<dbReference type="GO" id="GO:0044209">
    <property type="term" value="P:AMP salvage"/>
    <property type="evidence" value="ECO:0007669"/>
    <property type="project" value="UniProtKB-UniRule"/>
</dbReference>
<dbReference type="CDD" id="cd01428">
    <property type="entry name" value="ADK"/>
    <property type="match status" value="1"/>
</dbReference>
<dbReference type="FunFam" id="3.40.50.300:FF:000106">
    <property type="entry name" value="Adenylate kinase mitochondrial"/>
    <property type="match status" value="1"/>
</dbReference>
<dbReference type="Gene3D" id="3.40.50.300">
    <property type="entry name" value="P-loop containing nucleotide triphosphate hydrolases"/>
    <property type="match status" value="1"/>
</dbReference>
<dbReference type="HAMAP" id="MF_00235">
    <property type="entry name" value="Adenylate_kinase_Adk"/>
    <property type="match status" value="1"/>
</dbReference>
<dbReference type="InterPro" id="IPR006259">
    <property type="entry name" value="Adenyl_kin_sub"/>
</dbReference>
<dbReference type="InterPro" id="IPR000850">
    <property type="entry name" value="Adenylat/UMP-CMP_kin"/>
</dbReference>
<dbReference type="InterPro" id="IPR033690">
    <property type="entry name" value="Adenylat_kinase_CS"/>
</dbReference>
<dbReference type="InterPro" id="IPR007862">
    <property type="entry name" value="Adenylate_kinase_lid-dom"/>
</dbReference>
<dbReference type="InterPro" id="IPR027417">
    <property type="entry name" value="P-loop_NTPase"/>
</dbReference>
<dbReference type="NCBIfam" id="TIGR01351">
    <property type="entry name" value="adk"/>
    <property type="match status" value="1"/>
</dbReference>
<dbReference type="NCBIfam" id="NF001380">
    <property type="entry name" value="PRK00279.1-2"/>
    <property type="match status" value="1"/>
</dbReference>
<dbReference type="NCBIfam" id="NF001381">
    <property type="entry name" value="PRK00279.1-3"/>
    <property type="match status" value="1"/>
</dbReference>
<dbReference type="NCBIfam" id="NF001386">
    <property type="entry name" value="PRK00279.2-4"/>
    <property type="match status" value="1"/>
</dbReference>
<dbReference type="NCBIfam" id="NF011100">
    <property type="entry name" value="PRK14527.1"/>
    <property type="match status" value="1"/>
</dbReference>
<dbReference type="PANTHER" id="PTHR23359">
    <property type="entry name" value="NUCLEOTIDE KINASE"/>
    <property type="match status" value="1"/>
</dbReference>
<dbReference type="Pfam" id="PF00406">
    <property type="entry name" value="ADK"/>
    <property type="match status" value="1"/>
</dbReference>
<dbReference type="Pfam" id="PF05191">
    <property type="entry name" value="ADK_lid"/>
    <property type="match status" value="1"/>
</dbReference>
<dbReference type="PRINTS" id="PR00094">
    <property type="entry name" value="ADENYLTKNASE"/>
</dbReference>
<dbReference type="SUPFAM" id="SSF52540">
    <property type="entry name" value="P-loop containing nucleoside triphosphate hydrolases"/>
    <property type="match status" value="1"/>
</dbReference>
<dbReference type="PROSITE" id="PS00113">
    <property type="entry name" value="ADENYLATE_KINASE"/>
    <property type="match status" value="1"/>
</dbReference>
<comment type="function">
    <text evidence="1">Catalyzes the reversible transfer of the terminal phosphate group between ATP and AMP. Plays an important role in cellular energy homeostasis and in adenine nucleotide metabolism.</text>
</comment>
<comment type="catalytic activity">
    <reaction evidence="1">
        <text>AMP + ATP = 2 ADP</text>
        <dbReference type="Rhea" id="RHEA:12973"/>
        <dbReference type="ChEBI" id="CHEBI:30616"/>
        <dbReference type="ChEBI" id="CHEBI:456215"/>
        <dbReference type="ChEBI" id="CHEBI:456216"/>
        <dbReference type="EC" id="2.7.4.3"/>
    </reaction>
</comment>
<comment type="pathway">
    <text evidence="1">Purine metabolism; AMP biosynthesis via salvage pathway; AMP from ADP: step 1/1.</text>
</comment>
<comment type="subunit">
    <text evidence="1">Monomer.</text>
</comment>
<comment type="subcellular location">
    <subcellularLocation>
        <location evidence="1">Cytoplasm</location>
    </subcellularLocation>
</comment>
<comment type="domain">
    <text evidence="1">Consists of three domains, a large central CORE domain and two small peripheral domains, NMPbind and LID, which undergo movements during catalysis. The LID domain closes over the site of phosphoryl transfer upon ATP binding. Assembling and dissambling the active center during each catalytic cycle provides an effective means to prevent ATP hydrolysis. Some bacteria have evolved a zinc-coordinating structure that stabilizes the LID domain.</text>
</comment>
<comment type="similarity">
    <text evidence="1">Belongs to the adenylate kinase family.</text>
</comment>
<gene>
    <name evidence="1" type="primary">adk</name>
    <name type="ordered locus">CTN_1014</name>
</gene>
<sequence length="220" mass="25064">MMAYLVFLGPPGAGKGTYAKRIQEKTGIPHISTGDIFRDIVKKENDELGKKIKEIMEKGELVPDELVNEVVKRRLSEKDCEKGFILDGYPRTVAQAEFLDSFLESQNKQLTAAVLFDVPEDVVVQRLTSRRICPKCGRIYNMISLPPKEDELCDDCKVKLVQRDDDKEETVRHRYKVYLEKTQPVIDYYGKKGILKRVDGTIGIDNVVAEVLKIIGWSDK</sequence>
<proteinExistence type="inferred from homology"/>